<dbReference type="GO" id="GO:1990904">
    <property type="term" value="C:ribonucleoprotein complex"/>
    <property type="evidence" value="ECO:0007669"/>
    <property type="project" value="UniProtKB-KW"/>
</dbReference>
<dbReference type="GO" id="GO:0005840">
    <property type="term" value="C:ribosome"/>
    <property type="evidence" value="ECO:0007669"/>
    <property type="project" value="UniProtKB-KW"/>
</dbReference>
<keyword id="KW-0903">Direct protein sequencing</keyword>
<keyword id="KW-0687">Ribonucleoprotein</keyword>
<keyword id="KW-0689">Ribosomal protein</keyword>
<evidence type="ECO:0000305" key="1"/>
<organism>
    <name type="scientific">Brevundimonas vesicularis</name>
    <name type="common">Pseudomonas vesicularis</name>
    <dbReference type="NCBI Taxonomy" id="41276"/>
    <lineage>
        <taxon>Bacteria</taxon>
        <taxon>Pseudomonadati</taxon>
        <taxon>Pseudomonadota</taxon>
        <taxon>Alphaproteobacteria</taxon>
        <taxon>Caulobacterales</taxon>
        <taxon>Caulobacteraceae</taxon>
        <taxon>Brevundimonas</taxon>
    </lineage>
</organism>
<sequence>TKIADLRSQTTDQLSDELLKLXKEQ</sequence>
<protein>
    <recommendedName>
        <fullName evidence="1">Large ribosomal subunit protein uL29</fullName>
    </recommendedName>
    <alternativeName>
        <fullName>50S ribosomal protein L29</fullName>
    </alternativeName>
</protein>
<reference key="1">
    <citation type="journal article" date="1995" name="Int. J. Syst. Bacteriol.">
        <title>Comparative ribosomal protein sequence analyses of a phylogenetically defined genus, Pseudomonas, and its relatives.</title>
        <authorList>
            <person name="Ochi K."/>
        </authorList>
    </citation>
    <scope>PROTEIN SEQUENCE</scope>
    <source>
        <strain>ATCC 11426 / DSM 7226 / JCM 1477 / LMG 2350 / NBRC 12165 / NCIMB 1945 / NCTC 10900</strain>
    </source>
</reference>
<accession>Q9R4P0</accession>
<proteinExistence type="evidence at protein level"/>
<comment type="similarity">
    <text evidence="1">Belongs to the universal ribosomal protein uL29 family.</text>
</comment>
<name>RL29_BREVE</name>
<feature type="chain" id="PRO_0000224001" description="Large ribosomal subunit protein uL29">
    <location>
        <begin position="1"/>
        <end position="25" status="greater than"/>
    </location>
</feature>
<feature type="non-terminal residue">
    <location>
        <position position="25"/>
    </location>
</feature>
<gene>
    <name type="primary">rpmC</name>
</gene>